<sequence>RPQIQVYSRHPPENGKPNILNCYVTQFHPPQIEIQMLKNGEIIPKVEMSDLSFSKDWSFYILAHTEFTPTETDQYACRVNHVSMDKPMTVNW</sequence>
<gene>
    <name type="primary">B2m</name>
</gene>
<feature type="chain" id="PRO_0000080736" description="Beta-2-microglobulin">
    <location>
        <begin position="1" status="less than"/>
        <end position="92" status="greater than"/>
    </location>
</feature>
<feature type="domain" description="Ig-like C1-type">
    <location>
        <begin position="2"/>
        <end position="89"/>
    </location>
</feature>
<feature type="disulfide bond" evidence="2">
    <location>
        <begin position="22"/>
        <end position="77"/>
    </location>
</feature>
<feature type="non-terminal residue">
    <location>
        <position position="1"/>
    </location>
</feature>
<feature type="non-terminal residue">
    <location>
        <position position="92"/>
    </location>
</feature>
<reference key="1">
    <citation type="journal article" date="1993" name="Immunogenetics">
        <title>Sequence divergence of B2m alleles of wild Mus musculus and Mus spretus implies positive selection.</title>
        <authorList>
            <person name="Hermel E."/>
            <person name="Robinson P.J."/>
            <person name="She J.-X."/>
            <person name="Lindahl K.F."/>
        </authorList>
    </citation>
    <scope>NUCLEOTIDE SEQUENCE [GENOMIC DNA]</scope>
    <source>
        <strain>SEI</strain>
        <strain>SET</strain>
        <strain>Spain.PT.</strain>
        <strain>STF</strain>
        <tissue>Liver</tissue>
    </source>
</reference>
<name>B2MG_MUSSP</name>
<evidence type="ECO:0000250" key="1"/>
<evidence type="ECO:0000255" key="2">
    <source>
        <dbReference type="PROSITE-ProRule" id="PRU00114"/>
    </source>
</evidence>
<evidence type="ECO:0000305" key="3"/>
<dbReference type="EMBL" id="L04992">
    <property type="protein sequence ID" value="AAA37302.1"/>
    <property type="molecule type" value="Genomic_DNA"/>
</dbReference>
<dbReference type="EMBL" id="L04993">
    <property type="protein sequence ID" value="AAA37303.1"/>
    <property type="molecule type" value="Genomic_DNA"/>
</dbReference>
<dbReference type="EMBL" id="L04994">
    <property type="protein sequence ID" value="AAA37304.1"/>
    <property type="molecule type" value="Genomic_DNA"/>
</dbReference>
<dbReference type="EMBL" id="M84362">
    <property type="protein sequence ID" value="AAA39666.1"/>
    <property type="molecule type" value="Genomic_DNA"/>
</dbReference>
<dbReference type="PIR" id="I84730">
    <property type="entry name" value="I84730"/>
</dbReference>
<dbReference type="SMR" id="Q04714"/>
<dbReference type="GO" id="GO:0005576">
    <property type="term" value="C:extracellular region"/>
    <property type="evidence" value="ECO:0007669"/>
    <property type="project" value="UniProtKB-SubCell"/>
</dbReference>
<dbReference type="GO" id="GO:0042612">
    <property type="term" value="C:MHC class I protein complex"/>
    <property type="evidence" value="ECO:0007669"/>
    <property type="project" value="UniProtKB-KW"/>
</dbReference>
<dbReference type="GO" id="GO:0002474">
    <property type="term" value="P:antigen processing and presentation of peptide antigen via MHC class I"/>
    <property type="evidence" value="ECO:0007669"/>
    <property type="project" value="UniProtKB-KW"/>
</dbReference>
<dbReference type="GO" id="GO:0006955">
    <property type="term" value="P:immune response"/>
    <property type="evidence" value="ECO:0007669"/>
    <property type="project" value="InterPro"/>
</dbReference>
<dbReference type="CDD" id="cd05770">
    <property type="entry name" value="IgC1_beta2m"/>
    <property type="match status" value="1"/>
</dbReference>
<dbReference type="FunFam" id="2.60.40.10:FF:001005">
    <property type="entry name" value="Beta-2-microglobulin"/>
    <property type="match status" value="1"/>
</dbReference>
<dbReference type="Gene3D" id="2.60.40.10">
    <property type="entry name" value="Immunoglobulins"/>
    <property type="match status" value="1"/>
</dbReference>
<dbReference type="InterPro" id="IPR015707">
    <property type="entry name" value="B2Microglobulin"/>
</dbReference>
<dbReference type="InterPro" id="IPR007110">
    <property type="entry name" value="Ig-like_dom"/>
</dbReference>
<dbReference type="InterPro" id="IPR036179">
    <property type="entry name" value="Ig-like_dom_sf"/>
</dbReference>
<dbReference type="InterPro" id="IPR013783">
    <property type="entry name" value="Ig-like_fold"/>
</dbReference>
<dbReference type="InterPro" id="IPR003006">
    <property type="entry name" value="Ig/MHC_CS"/>
</dbReference>
<dbReference type="InterPro" id="IPR003597">
    <property type="entry name" value="Ig_C1-set"/>
</dbReference>
<dbReference type="InterPro" id="IPR050160">
    <property type="entry name" value="MHC/Immunoglobulin"/>
</dbReference>
<dbReference type="PANTHER" id="PTHR19944:SF62">
    <property type="entry name" value="BETA-2-MICROGLOBULIN"/>
    <property type="match status" value="1"/>
</dbReference>
<dbReference type="PANTHER" id="PTHR19944">
    <property type="entry name" value="MHC CLASS II-RELATED"/>
    <property type="match status" value="1"/>
</dbReference>
<dbReference type="Pfam" id="PF07654">
    <property type="entry name" value="C1-set"/>
    <property type="match status" value="1"/>
</dbReference>
<dbReference type="SMART" id="SM00407">
    <property type="entry name" value="IGc1"/>
    <property type="match status" value="1"/>
</dbReference>
<dbReference type="SUPFAM" id="SSF48726">
    <property type="entry name" value="Immunoglobulin"/>
    <property type="match status" value="1"/>
</dbReference>
<dbReference type="PROSITE" id="PS50835">
    <property type="entry name" value="IG_LIKE"/>
    <property type="match status" value="1"/>
</dbReference>
<dbReference type="PROSITE" id="PS00290">
    <property type="entry name" value="IG_MHC"/>
    <property type="match status" value="1"/>
</dbReference>
<proteinExistence type="inferred from homology"/>
<comment type="function">
    <text evidence="1">Component of the class I major histocompatibility complex (MHC). Involved in the presentation of peptide antigens to the immune system (By similarity).</text>
</comment>
<comment type="subunit">
    <text evidence="1">Heterodimer of an alpha chain and a beta chain. Beta-2-microglobulin is the beta-chain of major histocompatibility complex class I molecules (By similarity).</text>
</comment>
<comment type="subcellular location">
    <subcellularLocation>
        <location evidence="1">Secreted</location>
    </subcellularLocation>
</comment>
<comment type="similarity">
    <text evidence="3">Belongs to the beta-2-microglobulin family.</text>
</comment>
<accession>Q04714</accession>
<organism>
    <name type="scientific">Mus spretus</name>
    <name type="common">Western Mediterranean mouse</name>
    <name type="synonym">Algerian mouse</name>
    <dbReference type="NCBI Taxonomy" id="10096"/>
    <lineage>
        <taxon>Eukaryota</taxon>
        <taxon>Metazoa</taxon>
        <taxon>Chordata</taxon>
        <taxon>Craniata</taxon>
        <taxon>Vertebrata</taxon>
        <taxon>Euteleostomi</taxon>
        <taxon>Mammalia</taxon>
        <taxon>Eutheria</taxon>
        <taxon>Euarchontoglires</taxon>
        <taxon>Glires</taxon>
        <taxon>Rodentia</taxon>
        <taxon>Myomorpha</taxon>
        <taxon>Muroidea</taxon>
        <taxon>Muridae</taxon>
        <taxon>Murinae</taxon>
        <taxon>Mus</taxon>
        <taxon>Mus</taxon>
    </lineage>
</organism>
<keyword id="KW-1015">Disulfide bond</keyword>
<keyword id="KW-0391">Immunity</keyword>
<keyword id="KW-0393">Immunoglobulin domain</keyword>
<keyword id="KW-0490">MHC I</keyword>
<keyword id="KW-0964">Secreted</keyword>
<protein>
    <recommendedName>
        <fullName>Beta-2-microglobulin</fullName>
    </recommendedName>
</protein>